<protein>
    <recommendedName>
        <fullName>Ras-related protein RABE1a</fullName>
        <shortName>AtRABE1a</shortName>
    </recommendedName>
    <alternativeName>
        <fullName>Ras-related protein Rab8B</fullName>
        <shortName>AtRab8B</shortName>
    </alternativeName>
</protein>
<name>RAE1A_ARATH</name>
<accession>O24466</accession>
<organism>
    <name type="scientific">Arabidopsis thaliana</name>
    <name type="common">Mouse-ear cress</name>
    <dbReference type="NCBI Taxonomy" id="3702"/>
    <lineage>
        <taxon>Eukaryota</taxon>
        <taxon>Viridiplantae</taxon>
        <taxon>Streptophyta</taxon>
        <taxon>Embryophyta</taxon>
        <taxon>Tracheophyta</taxon>
        <taxon>Spermatophyta</taxon>
        <taxon>Magnoliopsida</taxon>
        <taxon>eudicotyledons</taxon>
        <taxon>Gunneridae</taxon>
        <taxon>Pentapetalae</taxon>
        <taxon>rosids</taxon>
        <taxon>malvids</taxon>
        <taxon>Brassicales</taxon>
        <taxon>Brassicaceae</taxon>
        <taxon>Camelineae</taxon>
        <taxon>Arabidopsis</taxon>
    </lineage>
</organism>
<sequence length="216" mass="23939">MAAPPARARADYDYLIKLLLIGDSGVGKSCLLLRFSDGSFTTSFITTIGIDFKIRTIELDGKRIKLQIWDTAGQERFRTITTAYYRGAMGILLVYDVTDESSFNNIRNWIRNIEQHASDSVNKILVGNKADMDESKRAVPKSKGQALADEYGMKFFETSAKTNLNVEEVFFSIAKDIKQRLADTDARAEPQTIKINQSDQGAGTSQATQKSACCGT</sequence>
<dbReference type="EMBL" id="U82434">
    <property type="protein sequence ID" value="AAB65088.1"/>
    <property type="molecule type" value="mRNA"/>
</dbReference>
<dbReference type="EMBL" id="AL132966">
    <property type="protein sequence ID" value="CAB67668.1"/>
    <property type="molecule type" value="Genomic_DNA"/>
</dbReference>
<dbReference type="EMBL" id="CP002686">
    <property type="protein sequence ID" value="AEE79116.1"/>
    <property type="molecule type" value="Genomic_DNA"/>
</dbReference>
<dbReference type="EMBL" id="CP002686">
    <property type="protein sequence ID" value="AEE79117.1"/>
    <property type="molecule type" value="Genomic_DNA"/>
</dbReference>
<dbReference type="EMBL" id="CP002686">
    <property type="protein sequence ID" value="AEE79118.1"/>
    <property type="molecule type" value="Genomic_DNA"/>
</dbReference>
<dbReference type="EMBL" id="BT004779">
    <property type="protein sequence ID" value="AAO44045.1"/>
    <property type="molecule type" value="mRNA"/>
</dbReference>
<dbReference type="EMBL" id="AK228083">
    <property type="protein sequence ID" value="BAF00042.1"/>
    <property type="molecule type" value="mRNA"/>
</dbReference>
<dbReference type="EMBL" id="AK230120">
    <property type="protein sequence ID" value="BAF01936.1"/>
    <property type="molecule type" value="mRNA"/>
</dbReference>
<dbReference type="EMBL" id="AY086756">
    <property type="protein sequence ID" value="AAM63807.1"/>
    <property type="molecule type" value="mRNA"/>
</dbReference>
<dbReference type="PIR" id="T45901">
    <property type="entry name" value="T45901"/>
</dbReference>
<dbReference type="RefSeq" id="NP_001078278.1">
    <property type="nucleotide sequence ID" value="NM_001084809.2"/>
</dbReference>
<dbReference type="RefSeq" id="NP_190929.1">
    <property type="nucleotide sequence ID" value="NM_115221.4"/>
</dbReference>
<dbReference type="RefSeq" id="NP_850696.1">
    <property type="nucleotide sequence ID" value="NM_180365.3"/>
</dbReference>
<dbReference type="SMR" id="O24466"/>
<dbReference type="BioGRID" id="9846">
    <property type="interactions" value="8"/>
</dbReference>
<dbReference type="FunCoup" id="O24466">
    <property type="interactions" value="4158"/>
</dbReference>
<dbReference type="IntAct" id="O24466">
    <property type="interactions" value="5"/>
</dbReference>
<dbReference type="STRING" id="3702.O24466"/>
<dbReference type="PaxDb" id="3702-AT3G53610.3"/>
<dbReference type="ProteomicsDB" id="236502"/>
<dbReference type="EnsemblPlants" id="AT3G53610.1">
    <property type="protein sequence ID" value="AT3G53610.1"/>
    <property type="gene ID" value="AT3G53610"/>
</dbReference>
<dbReference type="EnsemblPlants" id="AT3G53610.2">
    <property type="protein sequence ID" value="AT3G53610.2"/>
    <property type="gene ID" value="AT3G53610"/>
</dbReference>
<dbReference type="EnsemblPlants" id="AT3G53610.3">
    <property type="protein sequence ID" value="AT3G53610.3"/>
    <property type="gene ID" value="AT3G53610"/>
</dbReference>
<dbReference type="GeneID" id="824529"/>
<dbReference type="Gramene" id="AT3G53610.1">
    <property type="protein sequence ID" value="AT3G53610.1"/>
    <property type="gene ID" value="AT3G53610"/>
</dbReference>
<dbReference type="Gramene" id="AT3G53610.2">
    <property type="protein sequence ID" value="AT3G53610.2"/>
    <property type="gene ID" value="AT3G53610"/>
</dbReference>
<dbReference type="Gramene" id="AT3G53610.3">
    <property type="protein sequence ID" value="AT3G53610.3"/>
    <property type="gene ID" value="AT3G53610"/>
</dbReference>
<dbReference type="KEGG" id="ath:AT3G53610"/>
<dbReference type="Araport" id="AT3G53610"/>
<dbReference type="TAIR" id="AT3G53610">
    <property type="gene designation" value="RAB8"/>
</dbReference>
<dbReference type="eggNOG" id="KOG0078">
    <property type="taxonomic scope" value="Eukaryota"/>
</dbReference>
<dbReference type="HOGENOM" id="CLU_041217_10_1_1"/>
<dbReference type="InParanoid" id="O24466"/>
<dbReference type="OMA" id="ENIRTWF"/>
<dbReference type="OrthoDB" id="9989112at2759"/>
<dbReference type="PhylomeDB" id="O24466"/>
<dbReference type="PRO" id="PR:O24466"/>
<dbReference type="Proteomes" id="UP000006548">
    <property type="component" value="Chromosome 3"/>
</dbReference>
<dbReference type="ExpressionAtlas" id="O24466">
    <property type="expression patterns" value="baseline and differential"/>
</dbReference>
<dbReference type="GO" id="GO:0000139">
    <property type="term" value="C:Golgi membrane"/>
    <property type="evidence" value="ECO:0007669"/>
    <property type="project" value="UniProtKB-SubCell"/>
</dbReference>
<dbReference type="GO" id="GO:0005886">
    <property type="term" value="C:plasma membrane"/>
    <property type="evidence" value="ECO:0007005"/>
    <property type="project" value="TAIR"/>
</dbReference>
<dbReference type="GO" id="GO:0005525">
    <property type="term" value="F:GTP binding"/>
    <property type="evidence" value="ECO:0007669"/>
    <property type="project" value="UniProtKB-KW"/>
</dbReference>
<dbReference type="GO" id="GO:0003924">
    <property type="term" value="F:GTPase activity"/>
    <property type="evidence" value="ECO:0007669"/>
    <property type="project" value="InterPro"/>
</dbReference>
<dbReference type="GO" id="GO:0015031">
    <property type="term" value="P:protein transport"/>
    <property type="evidence" value="ECO:0007669"/>
    <property type="project" value="UniProtKB-KW"/>
</dbReference>
<dbReference type="CDD" id="cd01867">
    <property type="entry name" value="Rab8_Rab10_Rab13_like"/>
    <property type="match status" value="1"/>
</dbReference>
<dbReference type="FunFam" id="3.40.50.300:FF:000308">
    <property type="entry name" value="ras-related protein RABE1c-like"/>
    <property type="match status" value="1"/>
</dbReference>
<dbReference type="Gene3D" id="3.40.50.300">
    <property type="entry name" value="P-loop containing nucleotide triphosphate hydrolases"/>
    <property type="match status" value="1"/>
</dbReference>
<dbReference type="InterPro" id="IPR027417">
    <property type="entry name" value="P-loop_NTPase"/>
</dbReference>
<dbReference type="InterPro" id="IPR005225">
    <property type="entry name" value="Small_GTP-bd"/>
</dbReference>
<dbReference type="InterPro" id="IPR001806">
    <property type="entry name" value="Small_GTPase"/>
</dbReference>
<dbReference type="InterPro" id="IPR050305">
    <property type="entry name" value="Small_GTPase_Rab"/>
</dbReference>
<dbReference type="NCBIfam" id="TIGR00231">
    <property type="entry name" value="small_GTP"/>
    <property type="match status" value="1"/>
</dbReference>
<dbReference type="PANTHER" id="PTHR47980">
    <property type="entry name" value="LD44762P"/>
    <property type="match status" value="1"/>
</dbReference>
<dbReference type="Pfam" id="PF00071">
    <property type="entry name" value="Ras"/>
    <property type="match status" value="1"/>
</dbReference>
<dbReference type="PRINTS" id="PR00449">
    <property type="entry name" value="RASTRNSFRMNG"/>
</dbReference>
<dbReference type="SMART" id="SM00177">
    <property type="entry name" value="ARF"/>
    <property type="match status" value="1"/>
</dbReference>
<dbReference type="SMART" id="SM00175">
    <property type="entry name" value="RAB"/>
    <property type="match status" value="1"/>
</dbReference>
<dbReference type="SMART" id="SM00176">
    <property type="entry name" value="RAN"/>
    <property type="match status" value="1"/>
</dbReference>
<dbReference type="SMART" id="SM00173">
    <property type="entry name" value="RAS"/>
    <property type="match status" value="1"/>
</dbReference>
<dbReference type="SMART" id="SM00174">
    <property type="entry name" value="RHO"/>
    <property type="match status" value="1"/>
</dbReference>
<dbReference type="SUPFAM" id="SSF52540">
    <property type="entry name" value="P-loop containing nucleoside triphosphate hydrolases"/>
    <property type="match status" value="1"/>
</dbReference>
<dbReference type="PROSITE" id="PS51419">
    <property type="entry name" value="RAB"/>
    <property type="match status" value="1"/>
</dbReference>
<comment type="function">
    <text evidence="1">Involved in membrane trafficking from the Golgi to the plasma membrane.</text>
</comment>
<comment type="subunit">
    <text evidence="5">Interacts with PI5K2.</text>
</comment>
<comment type="subcellular location">
    <subcellularLocation>
        <location>Golgi apparatus membrane</location>
    </subcellularLocation>
    <subcellularLocation>
        <location evidence="4">Cell membrane</location>
        <topology evidence="6">Lipid-anchor</topology>
    </subcellularLocation>
</comment>
<comment type="induction">
    <text evidence="3">By ethylene.</text>
</comment>
<comment type="similarity">
    <text evidence="6">Belongs to the small GTPase superfamily. Rab family.</text>
</comment>
<keyword id="KW-1003">Cell membrane</keyword>
<keyword id="KW-0333">Golgi apparatus</keyword>
<keyword id="KW-0342">GTP-binding</keyword>
<keyword id="KW-0449">Lipoprotein</keyword>
<keyword id="KW-0472">Membrane</keyword>
<keyword id="KW-0547">Nucleotide-binding</keyword>
<keyword id="KW-0636">Prenylation</keyword>
<keyword id="KW-0653">Protein transport</keyword>
<keyword id="KW-1185">Reference proteome</keyword>
<keyword id="KW-0813">Transport</keyword>
<proteinExistence type="evidence at protein level"/>
<gene>
    <name type="primary">RABE1A</name>
    <name type="synonym">RAB8</name>
    <name type="synonym">RAB8B</name>
    <name type="ordered locus">At3g53610</name>
    <name type="ORF">F4P12.310</name>
</gene>
<reference key="1">
    <citation type="submission" date="1996-12" db="EMBL/GenBank/DDBJ databases">
        <title>A new member of the rab-family from Arabidospsis.</title>
        <authorList>
            <person name="Bischoff F."/>
            <person name="Palme K."/>
        </authorList>
    </citation>
    <scope>NUCLEOTIDE SEQUENCE [MRNA]</scope>
    <source>
        <strain>cv. Columbia</strain>
    </source>
</reference>
<reference key="2">
    <citation type="journal article" date="2000" name="Nature">
        <title>Sequence and analysis of chromosome 3 of the plant Arabidopsis thaliana.</title>
        <authorList>
            <person name="Salanoubat M."/>
            <person name="Lemcke K."/>
            <person name="Rieger M."/>
            <person name="Ansorge W."/>
            <person name="Unseld M."/>
            <person name="Fartmann B."/>
            <person name="Valle G."/>
            <person name="Bloecker H."/>
            <person name="Perez-Alonso M."/>
            <person name="Obermaier B."/>
            <person name="Delseny M."/>
            <person name="Boutry M."/>
            <person name="Grivell L.A."/>
            <person name="Mache R."/>
            <person name="Puigdomenech P."/>
            <person name="De Simone V."/>
            <person name="Choisne N."/>
            <person name="Artiguenave F."/>
            <person name="Robert C."/>
            <person name="Brottier P."/>
            <person name="Wincker P."/>
            <person name="Cattolico L."/>
            <person name="Weissenbach J."/>
            <person name="Saurin W."/>
            <person name="Quetier F."/>
            <person name="Schaefer M."/>
            <person name="Mueller-Auer S."/>
            <person name="Gabel C."/>
            <person name="Fuchs M."/>
            <person name="Benes V."/>
            <person name="Wurmbach E."/>
            <person name="Drzonek H."/>
            <person name="Erfle H."/>
            <person name="Jordan N."/>
            <person name="Bangert S."/>
            <person name="Wiedelmann R."/>
            <person name="Kranz H."/>
            <person name="Voss H."/>
            <person name="Holland R."/>
            <person name="Brandt P."/>
            <person name="Nyakatura G."/>
            <person name="Vezzi A."/>
            <person name="D'Angelo M."/>
            <person name="Pallavicini A."/>
            <person name="Toppo S."/>
            <person name="Simionati B."/>
            <person name="Conrad A."/>
            <person name="Hornischer K."/>
            <person name="Kauer G."/>
            <person name="Loehnert T.-H."/>
            <person name="Nordsiek G."/>
            <person name="Reichelt J."/>
            <person name="Scharfe M."/>
            <person name="Schoen O."/>
            <person name="Bargues M."/>
            <person name="Terol J."/>
            <person name="Climent J."/>
            <person name="Navarro P."/>
            <person name="Collado C."/>
            <person name="Perez-Perez A."/>
            <person name="Ottenwaelder B."/>
            <person name="Duchemin D."/>
            <person name="Cooke R."/>
            <person name="Laudie M."/>
            <person name="Berger-Llauro C."/>
            <person name="Purnelle B."/>
            <person name="Masuy D."/>
            <person name="de Haan M."/>
            <person name="Maarse A.C."/>
            <person name="Alcaraz J.-P."/>
            <person name="Cottet A."/>
            <person name="Casacuberta E."/>
            <person name="Monfort A."/>
            <person name="Argiriou A."/>
            <person name="Flores M."/>
            <person name="Liguori R."/>
            <person name="Vitale D."/>
            <person name="Mannhaupt G."/>
            <person name="Haase D."/>
            <person name="Schoof H."/>
            <person name="Rudd S."/>
            <person name="Zaccaria P."/>
            <person name="Mewes H.-W."/>
            <person name="Mayer K.F.X."/>
            <person name="Kaul S."/>
            <person name="Town C.D."/>
            <person name="Koo H.L."/>
            <person name="Tallon L.J."/>
            <person name="Jenkins J."/>
            <person name="Rooney T."/>
            <person name="Rizzo M."/>
            <person name="Walts A."/>
            <person name="Utterback T."/>
            <person name="Fujii C.Y."/>
            <person name="Shea T.P."/>
            <person name="Creasy T.H."/>
            <person name="Haas B."/>
            <person name="Maiti R."/>
            <person name="Wu D."/>
            <person name="Peterson J."/>
            <person name="Van Aken S."/>
            <person name="Pai G."/>
            <person name="Militscher J."/>
            <person name="Sellers P."/>
            <person name="Gill J.E."/>
            <person name="Feldblyum T.V."/>
            <person name="Preuss D."/>
            <person name="Lin X."/>
            <person name="Nierman W.C."/>
            <person name="Salzberg S.L."/>
            <person name="White O."/>
            <person name="Venter J.C."/>
            <person name="Fraser C.M."/>
            <person name="Kaneko T."/>
            <person name="Nakamura Y."/>
            <person name="Sato S."/>
            <person name="Kato T."/>
            <person name="Asamizu E."/>
            <person name="Sasamoto S."/>
            <person name="Kimura T."/>
            <person name="Idesawa K."/>
            <person name="Kawashima K."/>
            <person name="Kishida Y."/>
            <person name="Kiyokawa C."/>
            <person name="Kohara M."/>
            <person name="Matsumoto M."/>
            <person name="Matsuno A."/>
            <person name="Muraki A."/>
            <person name="Nakayama S."/>
            <person name="Nakazaki N."/>
            <person name="Shinpo S."/>
            <person name="Takeuchi C."/>
            <person name="Wada T."/>
            <person name="Watanabe A."/>
            <person name="Yamada M."/>
            <person name="Yasuda M."/>
            <person name="Tabata S."/>
        </authorList>
    </citation>
    <scope>NUCLEOTIDE SEQUENCE [LARGE SCALE GENOMIC DNA]</scope>
    <source>
        <strain>cv. Columbia</strain>
    </source>
</reference>
<reference key="3">
    <citation type="journal article" date="2017" name="Plant J.">
        <title>Araport11: a complete reannotation of the Arabidopsis thaliana reference genome.</title>
        <authorList>
            <person name="Cheng C.Y."/>
            <person name="Krishnakumar V."/>
            <person name="Chan A.P."/>
            <person name="Thibaud-Nissen F."/>
            <person name="Schobel S."/>
            <person name="Town C.D."/>
        </authorList>
    </citation>
    <scope>GENOME REANNOTATION</scope>
    <source>
        <strain>cv. Columbia</strain>
    </source>
</reference>
<reference key="4">
    <citation type="journal article" date="2003" name="Science">
        <title>Empirical analysis of transcriptional activity in the Arabidopsis genome.</title>
        <authorList>
            <person name="Yamada K."/>
            <person name="Lim J."/>
            <person name="Dale J.M."/>
            <person name="Chen H."/>
            <person name="Shinn P."/>
            <person name="Palm C.J."/>
            <person name="Southwick A.M."/>
            <person name="Wu H.C."/>
            <person name="Kim C.J."/>
            <person name="Nguyen M."/>
            <person name="Pham P.K."/>
            <person name="Cheuk R.F."/>
            <person name="Karlin-Newmann G."/>
            <person name="Liu S.X."/>
            <person name="Lam B."/>
            <person name="Sakano H."/>
            <person name="Wu T."/>
            <person name="Yu G."/>
            <person name="Miranda M."/>
            <person name="Quach H.L."/>
            <person name="Tripp M."/>
            <person name="Chang C.H."/>
            <person name="Lee J.M."/>
            <person name="Toriumi M.J."/>
            <person name="Chan M.M."/>
            <person name="Tang C.C."/>
            <person name="Onodera C.S."/>
            <person name="Deng J.M."/>
            <person name="Akiyama K."/>
            <person name="Ansari Y."/>
            <person name="Arakawa T."/>
            <person name="Banh J."/>
            <person name="Banno F."/>
            <person name="Bowser L."/>
            <person name="Brooks S.Y."/>
            <person name="Carninci P."/>
            <person name="Chao Q."/>
            <person name="Choy N."/>
            <person name="Enju A."/>
            <person name="Goldsmith A.D."/>
            <person name="Gurjal M."/>
            <person name="Hansen N.F."/>
            <person name="Hayashizaki Y."/>
            <person name="Johnson-Hopson C."/>
            <person name="Hsuan V.W."/>
            <person name="Iida K."/>
            <person name="Karnes M."/>
            <person name="Khan S."/>
            <person name="Koesema E."/>
            <person name="Ishida J."/>
            <person name="Jiang P.X."/>
            <person name="Jones T."/>
            <person name="Kawai J."/>
            <person name="Kamiya A."/>
            <person name="Meyers C."/>
            <person name="Nakajima M."/>
            <person name="Narusaka M."/>
            <person name="Seki M."/>
            <person name="Sakurai T."/>
            <person name="Satou M."/>
            <person name="Tamse R."/>
            <person name="Vaysberg M."/>
            <person name="Wallender E.K."/>
            <person name="Wong C."/>
            <person name="Yamamura Y."/>
            <person name="Yuan S."/>
            <person name="Shinozaki K."/>
            <person name="Davis R.W."/>
            <person name="Theologis A."/>
            <person name="Ecker J.R."/>
        </authorList>
    </citation>
    <scope>NUCLEOTIDE SEQUENCE [LARGE SCALE MRNA]</scope>
    <source>
        <strain>cv. Columbia</strain>
    </source>
</reference>
<reference key="5">
    <citation type="submission" date="2006-07" db="EMBL/GenBank/DDBJ databases">
        <title>Large-scale analysis of RIKEN Arabidopsis full-length (RAFL) cDNAs.</title>
        <authorList>
            <person name="Totoki Y."/>
            <person name="Seki M."/>
            <person name="Ishida J."/>
            <person name="Nakajima M."/>
            <person name="Enju A."/>
            <person name="Kamiya A."/>
            <person name="Narusaka M."/>
            <person name="Shin-i T."/>
            <person name="Nakagawa M."/>
            <person name="Sakamoto N."/>
            <person name="Oishi K."/>
            <person name="Kohara Y."/>
            <person name="Kobayashi M."/>
            <person name="Toyoda A."/>
            <person name="Sakaki Y."/>
            <person name="Sakurai T."/>
            <person name="Iida K."/>
            <person name="Akiyama K."/>
            <person name="Satou M."/>
            <person name="Toyoda T."/>
            <person name="Konagaya A."/>
            <person name="Carninci P."/>
            <person name="Kawai J."/>
            <person name="Hayashizaki Y."/>
            <person name="Shinozaki K."/>
        </authorList>
    </citation>
    <scope>NUCLEOTIDE SEQUENCE [LARGE SCALE MRNA]</scope>
    <source>
        <strain>cv. Columbia</strain>
    </source>
</reference>
<reference key="6">
    <citation type="submission" date="2002-03" db="EMBL/GenBank/DDBJ databases">
        <title>Full-length cDNA from Arabidopsis thaliana.</title>
        <authorList>
            <person name="Brover V.V."/>
            <person name="Troukhan M.E."/>
            <person name="Alexandrov N.A."/>
            <person name="Lu Y.-P."/>
            <person name="Flavell R.B."/>
            <person name="Feldmann K.A."/>
        </authorList>
    </citation>
    <scope>NUCLEOTIDE SEQUENCE [LARGE SCALE MRNA]</scope>
</reference>
<reference key="7">
    <citation type="journal article" date="2003" name="Plant Physiol.">
        <title>Analysis of the small GTPase gene superfamily of Arabidopsis.</title>
        <authorList>
            <person name="Vernoud V."/>
            <person name="Horton A.C."/>
            <person name="Yang Z."/>
            <person name="Nielsen E."/>
        </authorList>
    </citation>
    <scope>GENE FAMILY</scope>
    <scope>NOMENCLATURE</scope>
</reference>
<reference key="8">
    <citation type="journal article" date="2003" name="Plant Physiol.">
        <title>Ethylene regulates monomeric GTP-binding protein gene expression and activity in Arabidopsis.</title>
        <authorList>
            <person name="Moshkov I.E."/>
            <person name="Mur L.A."/>
            <person name="Novikova G.V."/>
            <person name="Smith A.R."/>
            <person name="Hall M.A."/>
        </authorList>
    </citation>
    <scope>INDUCTION BY ETHYLENE</scope>
</reference>
<reference key="9">
    <citation type="journal article" date="2004" name="Mol. Cell. Proteomics">
        <title>Identification of new intrinsic proteins in Arabidopsis plasma membrane proteome.</title>
        <authorList>
            <person name="Marmagne A."/>
            <person name="Rouet M.-A."/>
            <person name="Ferro M."/>
            <person name="Rolland N."/>
            <person name="Alcon C."/>
            <person name="Joyard J."/>
            <person name="Garin J."/>
            <person name="Barbier-Brygoo H."/>
            <person name="Ephritikhine G."/>
        </authorList>
    </citation>
    <scope>IDENTIFICATION BY MASS SPECTROMETRY</scope>
    <scope>SUBCELLULAR LOCATION [LARGE SCALE ANALYSIS]</scope>
</reference>
<reference key="10">
    <citation type="journal article" date="2009" name="J. Cell Sci.">
        <title>Arabidopsis Rab-E GTPases exhibit a novel interaction with a plasma-membrane phosphatidylinositol-4-phosphate 5-kinase.</title>
        <authorList>
            <person name="Camacho L."/>
            <person name="Smertenko A.P."/>
            <person name="Perez-Gomez J."/>
            <person name="Hussey P.J."/>
            <person name="Moore I."/>
        </authorList>
    </citation>
    <scope>INTERACTION WITH PI5K2</scope>
</reference>
<evidence type="ECO:0000250" key="1"/>
<evidence type="ECO:0000256" key="2">
    <source>
        <dbReference type="SAM" id="MobiDB-lite"/>
    </source>
</evidence>
<evidence type="ECO:0000269" key="3">
    <source>
    </source>
</evidence>
<evidence type="ECO:0000269" key="4">
    <source>
    </source>
</evidence>
<evidence type="ECO:0000269" key="5">
    <source>
    </source>
</evidence>
<evidence type="ECO:0000305" key="6"/>
<feature type="chain" id="PRO_0000407332" description="Ras-related protein RABE1a">
    <location>
        <begin position="1"/>
        <end position="216"/>
    </location>
</feature>
<feature type="region of interest" description="Disordered" evidence="2">
    <location>
        <begin position="185"/>
        <end position="216"/>
    </location>
</feature>
<feature type="short sequence motif" description="Effector region" evidence="1">
    <location>
        <begin position="44"/>
        <end position="52"/>
    </location>
</feature>
<feature type="compositionally biased region" description="Polar residues" evidence="2">
    <location>
        <begin position="193"/>
        <end position="216"/>
    </location>
</feature>
<feature type="binding site" evidence="1">
    <location>
        <begin position="22"/>
        <end position="29"/>
    </location>
    <ligand>
        <name>GTP</name>
        <dbReference type="ChEBI" id="CHEBI:37565"/>
    </ligand>
</feature>
<feature type="binding site" evidence="1">
    <location>
        <begin position="70"/>
        <end position="74"/>
    </location>
    <ligand>
        <name>GTP</name>
        <dbReference type="ChEBI" id="CHEBI:37565"/>
    </ligand>
</feature>
<feature type="binding site" evidence="1">
    <location>
        <begin position="128"/>
        <end position="131"/>
    </location>
    <ligand>
        <name>GTP</name>
        <dbReference type="ChEBI" id="CHEBI:37565"/>
    </ligand>
</feature>
<feature type="binding site" evidence="1">
    <location>
        <begin position="159"/>
        <end position="160"/>
    </location>
    <ligand>
        <name>GTP</name>
        <dbReference type="ChEBI" id="CHEBI:37565"/>
    </ligand>
</feature>
<feature type="lipid moiety-binding region" description="S-geranylgeranyl cysteine" evidence="1">
    <location>
        <position position="213"/>
    </location>
</feature>
<feature type="lipid moiety-binding region" description="S-geranylgeranyl cysteine" evidence="1">
    <location>
        <position position="214"/>
    </location>
</feature>